<comment type="function">
    <text evidence="2">Involved in base excision repair of DNA damaged by oxidation or by mutagenic agents. Acts as a DNA glycosylase that recognizes and removes damaged bases. Has a preference for oxidized purines, such as 7,8-dihydro-8-oxoguanine (8-oxoG). Has AP (apurinic/apyrimidinic) lyase activity and introduces nicks in the DNA strand. Cleaves the DNA backbone by beta-delta elimination to generate a single-strand break at the site of the removed base with both 3'- and 5'-phosphates.</text>
</comment>
<comment type="catalytic activity">
    <reaction evidence="2">
        <text>Hydrolysis of DNA containing ring-opened 7-methylguanine residues, releasing 2,6-diamino-4-hydroxy-5-(N-methyl)formamidopyrimidine.</text>
        <dbReference type="EC" id="3.2.2.23"/>
    </reaction>
</comment>
<comment type="catalytic activity">
    <reaction evidence="2">
        <text>2'-deoxyribonucleotide-(2'-deoxyribose 5'-phosphate)-2'-deoxyribonucleotide-DNA = a 3'-end 2'-deoxyribonucleotide-(2,3-dehydro-2,3-deoxyribose 5'-phosphate)-DNA + a 5'-end 5'-phospho-2'-deoxyribonucleoside-DNA + H(+)</text>
        <dbReference type="Rhea" id="RHEA:66592"/>
        <dbReference type="Rhea" id="RHEA-COMP:13180"/>
        <dbReference type="Rhea" id="RHEA-COMP:16897"/>
        <dbReference type="Rhea" id="RHEA-COMP:17067"/>
        <dbReference type="ChEBI" id="CHEBI:15378"/>
        <dbReference type="ChEBI" id="CHEBI:136412"/>
        <dbReference type="ChEBI" id="CHEBI:157695"/>
        <dbReference type="ChEBI" id="CHEBI:167181"/>
        <dbReference type="EC" id="4.2.99.18"/>
    </reaction>
</comment>
<comment type="cofactor">
    <cofactor evidence="2">
        <name>Zn(2+)</name>
        <dbReference type="ChEBI" id="CHEBI:29105"/>
    </cofactor>
    <text evidence="2">Binds 1 zinc ion per subunit.</text>
</comment>
<comment type="subunit">
    <text evidence="2">Monomer.</text>
</comment>
<comment type="similarity">
    <text evidence="2">Belongs to the FPG family.</text>
</comment>
<keyword id="KW-0227">DNA damage</keyword>
<keyword id="KW-0234">DNA repair</keyword>
<keyword id="KW-0238">DNA-binding</keyword>
<keyword id="KW-0326">Glycosidase</keyword>
<keyword id="KW-0378">Hydrolase</keyword>
<keyword id="KW-0456">Lyase</keyword>
<keyword id="KW-0479">Metal-binding</keyword>
<keyword id="KW-0511">Multifunctional enzyme</keyword>
<keyword id="KW-0862">Zinc</keyword>
<keyword id="KW-0863">Zinc-finger</keyword>
<protein>
    <recommendedName>
        <fullName evidence="2">Formamidopyrimidine-DNA glycosylase</fullName>
        <shortName evidence="2">Fapy-DNA glycosylase</shortName>
        <ecNumber evidence="2">3.2.2.23</ecNumber>
    </recommendedName>
    <alternativeName>
        <fullName evidence="2">DNA-(apurinic or apyrimidinic site) lyase MutM</fullName>
        <shortName evidence="2">AP lyase MutM</shortName>
        <ecNumber evidence="2">4.2.99.18</ecNumber>
    </alternativeName>
</protein>
<name>FPG_ECOHS</name>
<organism>
    <name type="scientific">Escherichia coli O9:H4 (strain HS)</name>
    <dbReference type="NCBI Taxonomy" id="331112"/>
    <lineage>
        <taxon>Bacteria</taxon>
        <taxon>Pseudomonadati</taxon>
        <taxon>Pseudomonadota</taxon>
        <taxon>Gammaproteobacteria</taxon>
        <taxon>Enterobacterales</taxon>
        <taxon>Enterobacteriaceae</taxon>
        <taxon>Escherichia</taxon>
    </lineage>
</organism>
<sequence length="269" mass="30290">MPELPEVETSRRGIEPHLVGATILHAVVRNGRLRWPVSEEIYRLSDQPVLSVQRRAKYLLLELPEGWIIIHLGMSGSLRILPEELPPEKHDHVDLVMSNGKVLRYTDPRRFGAWLWTKELEGHNVLTHLGPEPLSDDFNGEYLHQKCAKKKTAIKPWLMDNKLVVGVGNIYASESLFAAGIHPDRLASSLSLAECELLARVIKAVLLRSIEQGGTTLKDFLQSDGKPGYFAQELQVYGRKGEPCRVCGTPIVATKHAQRATFYCRQCQK</sequence>
<reference key="1">
    <citation type="journal article" date="2008" name="J. Bacteriol.">
        <title>The pangenome structure of Escherichia coli: comparative genomic analysis of E. coli commensal and pathogenic isolates.</title>
        <authorList>
            <person name="Rasko D.A."/>
            <person name="Rosovitz M.J."/>
            <person name="Myers G.S.A."/>
            <person name="Mongodin E.F."/>
            <person name="Fricke W.F."/>
            <person name="Gajer P."/>
            <person name="Crabtree J."/>
            <person name="Sebaihia M."/>
            <person name="Thomson N.R."/>
            <person name="Chaudhuri R."/>
            <person name="Henderson I.R."/>
            <person name="Sperandio V."/>
            <person name="Ravel J."/>
        </authorList>
    </citation>
    <scope>NUCLEOTIDE SEQUENCE [LARGE SCALE GENOMIC DNA]</scope>
    <source>
        <strain>HS</strain>
    </source>
</reference>
<feature type="initiator methionine" description="Removed" evidence="1">
    <location>
        <position position="1"/>
    </location>
</feature>
<feature type="chain" id="PRO_1000057692" description="Formamidopyrimidine-DNA glycosylase">
    <location>
        <begin position="2"/>
        <end position="269"/>
    </location>
</feature>
<feature type="zinc finger region" description="FPG-type" evidence="2">
    <location>
        <begin position="235"/>
        <end position="269"/>
    </location>
</feature>
<feature type="active site" description="Schiff-base intermediate with DNA" evidence="2">
    <location>
        <position position="2"/>
    </location>
</feature>
<feature type="active site" description="Proton donor" evidence="2">
    <location>
        <position position="3"/>
    </location>
</feature>
<feature type="active site" description="Proton donor; for beta-elimination activity" evidence="2">
    <location>
        <position position="57"/>
    </location>
</feature>
<feature type="active site" description="Proton donor; for delta-elimination activity" evidence="2">
    <location>
        <position position="259"/>
    </location>
</feature>
<feature type="binding site" evidence="2">
    <location>
        <position position="90"/>
    </location>
    <ligand>
        <name>DNA</name>
        <dbReference type="ChEBI" id="CHEBI:16991"/>
    </ligand>
</feature>
<feature type="binding site" evidence="2">
    <location>
        <position position="109"/>
    </location>
    <ligand>
        <name>DNA</name>
        <dbReference type="ChEBI" id="CHEBI:16991"/>
    </ligand>
</feature>
<feature type="binding site" evidence="2">
    <location>
        <position position="150"/>
    </location>
    <ligand>
        <name>DNA</name>
        <dbReference type="ChEBI" id="CHEBI:16991"/>
    </ligand>
</feature>
<evidence type="ECO:0000250" key="1"/>
<evidence type="ECO:0000255" key="2">
    <source>
        <dbReference type="HAMAP-Rule" id="MF_00103"/>
    </source>
</evidence>
<dbReference type="EC" id="3.2.2.23" evidence="2"/>
<dbReference type="EC" id="4.2.99.18" evidence="2"/>
<dbReference type="EMBL" id="CP000802">
    <property type="protein sequence ID" value="ABV08051.1"/>
    <property type="molecule type" value="Genomic_DNA"/>
</dbReference>
<dbReference type="RefSeq" id="WP_001114543.1">
    <property type="nucleotide sequence ID" value="NC_009800.1"/>
</dbReference>
<dbReference type="SMR" id="A8A697"/>
<dbReference type="GeneID" id="75202204"/>
<dbReference type="KEGG" id="ecx:EcHS_A3844"/>
<dbReference type="HOGENOM" id="CLU_038423_1_1_6"/>
<dbReference type="GO" id="GO:0034039">
    <property type="term" value="F:8-oxo-7,8-dihydroguanine DNA N-glycosylase activity"/>
    <property type="evidence" value="ECO:0007669"/>
    <property type="project" value="TreeGrafter"/>
</dbReference>
<dbReference type="GO" id="GO:0140078">
    <property type="term" value="F:class I DNA-(apurinic or apyrimidinic site) endonuclease activity"/>
    <property type="evidence" value="ECO:0007669"/>
    <property type="project" value="UniProtKB-EC"/>
</dbReference>
<dbReference type="GO" id="GO:0003684">
    <property type="term" value="F:damaged DNA binding"/>
    <property type="evidence" value="ECO:0007669"/>
    <property type="project" value="InterPro"/>
</dbReference>
<dbReference type="GO" id="GO:0008270">
    <property type="term" value="F:zinc ion binding"/>
    <property type="evidence" value="ECO:0007669"/>
    <property type="project" value="UniProtKB-UniRule"/>
</dbReference>
<dbReference type="GO" id="GO:0006284">
    <property type="term" value="P:base-excision repair"/>
    <property type="evidence" value="ECO:0007669"/>
    <property type="project" value="InterPro"/>
</dbReference>
<dbReference type="CDD" id="cd08966">
    <property type="entry name" value="EcFpg-like_N"/>
    <property type="match status" value="1"/>
</dbReference>
<dbReference type="FunFam" id="1.10.8.50:FF:000003">
    <property type="entry name" value="Formamidopyrimidine-DNA glycosylase"/>
    <property type="match status" value="1"/>
</dbReference>
<dbReference type="FunFam" id="3.20.190.10:FF:000001">
    <property type="entry name" value="Formamidopyrimidine-DNA glycosylase"/>
    <property type="match status" value="1"/>
</dbReference>
<dbReference type="Gene3D" id="1.10.8.50">
    <property type="match status" value="1"/>
</dbReference>
<dbReference type="Gene3D" id="3.20.190.10">
    <property type="entry name" value="MutM-like, N-terminal"/>
    <property type="match status" value="1"/>
</dbReference>
<dbReference type="HAMAP" id="MF_00103">
    <property type="entry name" value="Fapy_DNA_glycosyl"/>
    <property type="match status" value="1"/>
</dbReference>
<dbReference type="InterPro" id="IPR015886">
    <property type="entry name" value="DNA_glyclase/AP_lyase_DNA-bd"/>
</dbReference>
<dbReference type="InterPro" id="IPR015887">
    <property type="entry name" value="DNA_glyclase_Znf_dom_DNA_BS"/>
</dbReference>
<dbReference type="InterPro" id="IPR020629">
    <property type="entry name" value="Formamido-pyr_DNA_Glyclase"/>
</dbReference>
<dbReference type="InterPro" id="IPR012319">
    <property type="entry name" value="FPG_cat"/>
</dbReference>
<dbReference type="InterPro" id="IPR035937">
    <property type="entry name" value="MutM-like_N-ter"/>
</dbReference>
<dbReference type="InterPro" id="IPR010979">
    <property type="entry name" value="Ribosomal_uS13-like_H2TH"/>
</dbReference>
<dbReference type="InterPro" id="IPR000214">
    <property type="entry name" value="Znf_DNA_glyclase/AP_lyase"/>
</dbReference>
<dbReference type="InterPro" id="IPR010663">
    <property type="entry name" value="Znf_FPG/IleRS"/>
</dbReference>
<dbReference type="NCBIfam" id="TIGR00577">
    <property type="entry name" value="fpg"/>
    <property type="match status" value="1"/>
</dbReference>
<dbReference type="NCBIfam" id="NF002211">
    <property type="entry name" value="PRK01103.1"/>
    <property type="match status" value="1"/>
</dbReference>
<dbReference type="PANTHER" id="PTHR22993">
    <property type="entry name" value="FORMAMIDOPYRIMIDINE-DNA GLYCOSYLASE"/>
    <property type="match status" value="1"/>
</dbReference>
<dbReference type="PANTHER" id="PTHR22993:SF9">
    <property type="entry name" value="FORMAMIDOPYRIMIDINE-DNA GLYCOSYLASE"/>
    <property type="match status" value="1"/>
</dbReference>
<dbReference type="Pfam" id="PF01149">
    <property type="entry name" value="Fapy_DNA_glyco"/>
    <property type="match status" value="1"/>
</dbReference>
<dbReference type="Pfam" id="PF06831">
    <property type="entry name" value="H2TH"/>
    <property type="match status" value="1"/>
</dbReference>
<dbReference type="Pfam" id="PF06827">
    <property type="entry name" value="zf-FPG_IleRS"/>
    <property type="match status" value="1"/>
</dbReference>
<dbReference type="SMART" id="SM00898">
    <property type="entry name" value="Fapy_DNA_glyco"/>
    <property type="match status" value="1"/>
</dbReference>
<dbReference type="SMART" id="SM01232">
    <property type="entry name" value="H2TH"/>
    <property type="match status" value="1"/>
</dbReference>
<dbReference type="SUPFAM" id="SSF57716">
    <property type="entry name" value="Glucocorticoid receptor-like (DNA-binding domain)"/>
    <property type="match status" value="1"/>
</dbReference>
<dbReference type="SUPFAM" id="SSF81624">
    <property type="entry name" value="N-terminal domain of MutM-like DNA repair proteins"/>
    <property type="match status" value="1"/>
</dbReference>
<dbReference type="SUPFAM" id="SSF46946">
    <property type="entry name" value="S13-like H2TH domain"/>
    <property type="match status" value="1"/>
</dbReference>
<dbReference type="PROSITE" id="PS51068">
    <property type="entry name" value="FPG_CAT"/>
    <property type="match status" value="1"/>
</dbReference>
<dbReference type="PROSITE" id="PS01242">
    <property type="entry name" value="ZF_FPG_1"/>
    <property type="match status" value="1"/>
</dbReference>
<dbReference type="PROSITE" id="PS51066">
    <property type="entry name" value="ZF_FPG_2"/>
    <property type="match status" value="1"/>
</dbReference>
<proteinExistence type="inferred from homology"/>
<gene>
    <name evidence="2" type="primary">mutM</name>
    <name evidence="2" type="synonym">fpg</name>
    <name type="ordered locus">EcHS_A3844</name>
</gene>
<accession>A8A697</accession>